<reference key="1">
    <citation type="journal article" date="2003" name="Proc. Natl. Acad. Sci. U.S.A.">
        <title>The complete genome sequence of the Arabidopsis and tomato pathogen Pseudomonas syringae pv. tomato DC3000.</title>
        <authorList>
            <person name="Buell C.R."/>
            <person name="Joardar V."/>
            <person name="Lindeberg M."/>
            <person name="Selengut J."/>
            <person name="Paulsen I.T."/>
            <person name="Gwinn M.L."/>
            <person name="Dodson R.J."/>
            <person name="DeBoy R.T."/>
            <person name="Durkin A.S."/>
            <person name="Kolonay J.F."/>
            <person name="Madupu R."/>
            <person name="Daugherty S.C."/>
            <person name="Brinkac L.M."/>
            <person name="Beanan M.J."/>
            <person name="Haft D.H."/>
            <person name="Nelson W.C."/>
            <person name="Davidsen T.M."/>
            <person name="Zafar N."/>
            <person name="Zhou L."/>
            <person name="Liu J."/>
            <person name="Yuan Q."/>
            <person name="Khouri H.M."/>
            <person name="Fedorova N.B."/>
            <person name="Tran B."/>
            <person name="Russell D."/>
            <person name="Berry K.J."/>
            <person name="Utterback T.R."/>
            <person name="Van Aken S.E."/>
            <person name="Feldblyum T.V."/>
            <person name="D'Ascenzo M."/>
            <person name="Deng W.-L."/>
            <person name="Ramos A.R."/>
            <person name="Alfano J.R."/>
            <person name="Cartinhour S."/>
            <person name="Chatterjee A.K."/>
            <person name="Delaney T.P."/>
            <person name="Lazarowitz S.G."/>
            <person name="Martin G.B."/>
            <person name="Schneider D.J."/>
            <person name="Tang X."/>
            <person name="Bender C.L."/>
            <person name="White O."/>
            <person name="Fraser C.M."/>
            <person name="Collmer A."/>
        </authorList>
    </citation>
    <scope>NUCLEOTIDE SEQUENCE [LARGE SCALE GENOMIC DNA]</scope>
    <source>
        <strain>ATCC BAA-871 / DC3000</strain>
    </source>
</reference>
<proteinExistence type="inferred from homology"/>
<gene>
    <name evidence="1" type="primary">rplS</name>
    <name type="ordered locus">PSPTO_1476</name>
</gene>
<protein>
    <recommendedName>
        <fullName evidence="1">Large ribosomal subunit protein bL19</fullName>
    </recommendedName>
    <alternativeName>
        <fullName evidence="2">50S ribosomal protein L19</fullName>
    </alternativeName>
</protein>
<dbReference type="EMBL" id="AE016853">
    <property type="protein sequence ID" value="AAO54997.1"/>
    <property type="molecule type" value="Genomic_DNA"/>
</dbReference>
<dbReference type="RefSeq" id="NP_791302.1">
    <property type="nucleotide sequence ID" value="NC_004578.1"/>
</dbReference>
<dbReference type="RefSeq" id="WP_002552524.1">
    <property type="nucleotide sequence ID" value="NC_004578.1"/>
</dbReference>
<dbReference type="SMR" id="Q886U9"/>
<dbReference type="STRING" id="223283.PSPTO_1476"/>
<dbReference type="GeneID" id="96217689"/>
<dbReference type="KEGG" id="pst:PSPTO_1476"/>
<dbReference type="PATRIC" id="fig|223283.9.peg.1497"/>
<dbReference type="eggNOG" id="COG0335">
    <property type="taxonomic scope" value="Bacteria"/>
</dbReference>
<dbReference type="HOGENOM" id="CLU_103507_1_0_6"/>
<dbReference type="OrthoDB" id="9803541at2"/>
<dbReference type="PhylomeDB" id="Q886U9"/>
<dbReference type="Proteomes" id="UP000002515">
    <property type="component" value="Chromosome"/>
</dbReference>
<dbReference type="GO" id="GO:0022625">
    <property type="term" value="C:cytosolic large ribosomal subunit"/>
    <property type="evidence" value="ECO:0007669"/>
    <property type="project" value="TreeGrafter"/>
</dbReference>
<dbReference type="GO" id="GO:0003735">
    <property type="term" value="F:structural constituent of ribosome"/>
    <property type="evidence" value="ECO:0007669"/>
    <property type="project" value="InterPro"/>
</dbReference>
<dbReference type="GO" id="GO:0006412">
    <property type="term" value="P:translation"/>
    <property type="evidence" value="ECO:0007669"/>
    <property type="project" value="UniProtKB-UniRule"/>
</dbReference>
<dbReference type="FunFam" id="2.30.30.790:FF:000001">
    <property type="entry name" value="50S ribosomal protein L19"/>
    <property type="match status" value="1"/>
</dbReference>
<dbReference type="Gene3D" id="2.30.30.790">
    <property type="match status" value="1"/>
</dbReference>
<dbReference type="HAMAP" id="MF_00402">
    <property type="entry name" value="Ribosomal_bL19"/>
    <property type="match status" value="1"/>
</dbReference>
<dbReference type="InterPro" id="IPR001857">
    <property type="entry name" value="Ribosomal_bL19"/>
</dbReference>
<dbReference type="InterPro" id="IPR018257">
    <property type="entry name" value="Ribosomal_bL19_CS"/>
</dbReference>
<dbReference type="InterPro" id="IPR038657">
    <property type="entry name" value="Ribosomal_bL19_sf"/>
</dbReference>
<dbReference type="InterPro" id="IPR008991">
    <property type="entry name" value="Translation_prot_SH3-like_sf"/>
</dbReference>
<dbReference type="NCBIfam" id="TIGR01024">
    <property type="entry name" value="rplS_bact"/>
    <property type="match status" value="1"/>
</dbReference>
<dbReference type="PANTHER" id="PTHR15680:SF9">
    <property type="entry name" value="LARGE RIBOSOMAL SUBUNIT PROTEIN BL19M"/>
    <property type="match status" value="1"/>
</dbReference>
<dbReference type="PANTHER" id="PTHR15680">
    <property type="entry name" value="RIBOSOMAL PROTEIN L19"/>
    <property type="match status" value="1"/>
</dbReference>
<dbReference type="Pfam" id="PF01245">
    <property type="entry name" value="Ribosomal_L19"/>
    <property type="match status" value="1"/>
</dbReference>
<dbReference type="PIRSF" id="PIRSF002191">
    <property type="entry name" value="Ribosomal_L19"/>
    <property type="match status" value="1"/>
</dbReference>
<dbReference type="PRINTS" id="PR00061">
    <property type="entry name" value="RIBOSOMALL19"/>
</dbReference>
<dbReference type="SUPFAM" id="SSF50104">
    <property type="entry name" value="Translation proteins SH3-like domain"/>
    <property type="match status" value="1"/>
</dbReference>
<dbReference type="PROSITE" id="PS01015">
    <property type="entry name" value="RIBOSOMAL_L19"/>
    <property type="match status" value="1"/>
</dbReference>
<feature type="chain" id="PRO_0000163512" description="Large ribosomal subunit protein bL19">
    <location>
        <begin position="1"/>
        <end position="116"/>
    </location>
</feature>
<name>RL19_PSESM</name>
<evidence type="ECO:0000255" key="1">
    <source>
        <dbReference type="HAMAP-Rule" id="MF_00402"/>
    </source>
</evidence>
<evidence type="ECO:0000305" key="2"/>
<organism>
    <name type="scientific">Pseudomonas syringae pv. tomato (strain ATCC BAA-871 / DC3000)</name>
    <dbReference type="NCBI Taxonomy" id="223283"/>
    <lineage>
        <taxon>Bacteria</taxon>
        <taxon>Pseudomonadati</taxon>
        <taxon>Pseudomonadota</taxon>
        <taxon>Gammaproteobacteria</taxon>
        <taxon>Pseudomonadales</taxon>
        <taxon>Pseudomonadaceae</taxon>
        <taxon>Pseudomonas</taxon>
    </lineage>
</organism>
<keyword id="KW-1185">Reference proteome</keyword>
<keyword id="KW-0687">Ribonucleoprotein</keyword>
<keyword id="KW-0689">Ribosomal protein</keyword>
<accession>Q886U9</accession>
<comment type="function">
    <text evidence="1">This protein is located at the 30S-50S ribosomal subunit interface and may play a role in the structure and function of the aminoacyl-tRNA binding site.</text>
</comment>
<comment type="similarity">
    <text evidence="1">Belongs to the bacterial ribosomal protein bL19 family.</text>
</comment>
<sequence>MTNKIILALEAEQMTKEIPTFAPGDTIVVQVKVKEGDRARLQAFEGVVIAKRNRGVNSAFTVRKISNGVGVERTFQTYSPQIDSMAVKRRGDVRKAKLYYLRDLSGKAARIKEKLS</sequence>